<feature type="chain" id="PRO_0000432105" description="HTH-type transcriptional regulator DdrOP3">
    <location>
        <begin position="1"/>
        <end position="129"/>
    </location>
</feature>
<feature type="domain" description="HTH cro/C1-type" evidence="2">
    <location>
        <begin position="7"/>
        <end position="61"/>
    </location>
</feature>
<feature type="DNA-binding region" description="H-T-H motif" evidence="2">
    <location>
        <begin position="18"/>
        <end position="37"/>
    </location>
</feature>
<feature type="site" description="Cleavage" evidence="5">
    <location>
        <begin position="106"/>
        <end position="107"/>
    </location>
</feature>
<protein>
    <recommendedName>
        <fullName evidence="4">HTH-type transcriptional regulator DdrOP3</fullName>
    </recommendedName>
</protein>
<reference key="1">
    <citation type="journal article" date="2009" name="PLoS Genet.">
        <title>Alliance of proteomics and genomics to unravel the specificities of Sahara bacterium Deinococcus deserti.</title>
        <authorList>
            <person name="de Groot A."/>
            <person name="Dulermo R."/>
            <person name="Ortet P."/>
            <person name="Blanchard L."/>
            <person name="Guerin P."/>
            <person name="Fernandez B."/>
            <person name="Vacherie B."/>
            <person name="Dossat C."/>
            <person name="Jolivet E."/>
            <person name="Siguier P."/>
            <person name="Chandler M."/>
            <person name="Barakat M."/>
            <person name="Dedieu A."/>
            <person name="Barbe V."/>
            <person name="Heulin T."/>
            <person name="Sommer S."/>
            <person name="Achouak W."/>
            <person name="Armengaud J."/>
        </authorList>
    </citation>
    <scope>NUCLEOTIDE SEQUENCE [LARGE SCALE GENOMIC DNA]</scope>
    <source>
        <strain>DSM 17065 / CIP 109153 / LMG 22923 / VCD115</strain>
        <plasmid>pDeide3</plasmid>
    </source>
</reference>
<reference key="2">
    <citation type="journal article" date="2014" name="Mol. Microbiol.">
        <title>Radiation response in Deinococcus deserti: IrrE is a metalloprotease that cleaves repressor protein DdrO.</title>
        <authorList>
            <person name="Ludanyi M."/>
            <person name="Blanchard L."/>
            <person name="Dulermo R."/>
            <person name="Brandelet G."/>
            <person name="Bellanger L."/>
            <person name="Pignol D."/>
            <person name="Lemaire D."/>
            <person name="de Groot A."/>
        </authorList>
    </citation>
    <scope>CLEAVAGE</scope>
    <source>
        <strain>RD19</strain>
    </source>
</reference>
<evidence type="ECO:0000250" key="1">
    <source>
        <dbReference type="UniProtKB" id="C1CYP4"/>
    </source>
</evidence>
<evidence type="ECO:0000255" key="2">
    <source>
        <dbReference type="PROSITE-ProRule" id="PRU00257"/>
    </source>
</evidence>
<evidence type="ECO:0000303" key="3">
    <source>
    </source>
</evidence>
<evidence type="ECO:0000305" key="4"/>
<evidence type="ECO:0000305" key="5">
    <source>
    </source>
</evidence>
<evidence type="ECO:0000312" key="6">
    <source>
        <dbReference type="EMBL" id="ACO48174.1"/>
    </source>
</evidence>
<accession>C1D3U5</accession>
<organism>
    <name type="scientific">Deinococcus deserti (strain DSM 17065 / CIP 109153 / LMG 22923 / VCD115)</name>
    <dbReference type="NCBI Taxonomy" id="546414"/>
    <lineage>
        <taxon>Bacteria</taxon>
        <taxon>Thermotogati</taxon>
        <taxon>Deinococcota</taxon>
        <taxon>Deinococci</taxon>
        <taxon>Deinococcales</taxon>
        <taxon>Deinococcaceae</taxon>
        <taxon>Deinococcus</taxon>
    </lineage>
</organism>
<dbReference type="EMBL" id="CP001117">
    <property type="protein sequence ID" value="ACO48174.1"/>
    <property type="molecule type" value="Genomic_DNA"/>
</dbReference>
<dbReference type="RefSeq" id="WP_012695046.1">
    <property type="nucleotide sequence ID" value="NC_012528.1"/>
</dbReference>
<dbReference type="SMR" id="C1D3U5"/>
<dbReference type="KEGG" id="ddr:Deide_3p02170"/>
<dbReference type="HOGENOM" id="CLU_1924139_0_0_0"/>
<dbReference type="OrthoDB" id="70105at2"/>
<dbReference type="Proteomes" id="UP000002208">
    <property type="component" value="Plasmid pDeide3"/>
</dbReference>
<dbReference type="GO" id="GO:0005829">
    <property type="term" value="C:cytosol"/>
    <property type="evidence" value="ECO:0007669"/>
    <property type="project" value="TreeGrafter"/>
</dbReference>
<dbReference type="GO" id="GO:0003677">
    <property type="term" value="F:DNA binding"/>
    <property type="evidence" value="ECO:0007669"/>
    <property type="project" value="UniProtKB-KW"/>
</dbReference>
<dbReference type="GO" id="GO:0003700">
    <property type="term" value="F:DNA-binding transcription factor activity"/>
    <property type="evidence" value="ECO:0007669"/>
    <property type="project" value="TreeGrafter"/>
</dbReference>
<dbReference type="CDD" id="cd00093">
    <property type="entry name" value="HTH_XRE"/>
    <property type="match status" value="1"/>
</dbReference>
<dbReference type="Gene3D" id="1.10.260.40">
    <property type="entry name" value="lambda repressor-like DNA-binding domains"/>
    <property type="match status" value="1"/>
</dbReference>
<dbReference type="InterPro" id="IPR050807">
    <property type="entry name" value="Bact_TransReg_Diox"/>
</dbReference>
<dbReference type="InterPro" id="IPR001387">
    <property type="entry name" value="Cro/C1-type_HTH"/>
</dbReference>
<dbReference type="InterPro" id="IPR010982">
    <property type="entry name" value="Lambda_DNA-bd_dom_sf"/>
</dbReference>
<dbReference type="PANTHER" id="PTHR46797">
    <property type="entry name" value="HTH-TYPE TRANSCRIPTIONAL REGULATOR"/>
    <property type="match status" value="1"/>
</dbReference>
<dbReference type="PANTHER" id="PTHR46797:SF1">
    <property type="entry name" value="METHYLPHOSPHONATE SYNTHASE"/>
    <property type="match status" value="1"/>
</dbReference>
<dbReference type="Pfam" id="PF01381">
    <property type="entry name" value="HTH_3"/>
    <property type="match status" value="1"/>
</dbReference>
<dbReference type="SMART" id="SM00530">
    <property type="entry name" value="HTH_XRE"/>
    <property type="match status" value="1"/>
</dbReference>
<dbReference type="SUPFAM" id="SSF47413">
    <property type="entry name" value="lambda repressor-like DNA-binding domains"/>
    <property type="match status" value="1"/>
</dbReference>
<dbReference type="PROSITE" id="PS50943">
    <property type="entry name" value="HTH_CROC1"/>
    <property type="match status" value="1"/>
</dbReference>
<proteinExistence type="evidence at protein level"/>
<gene>
    <name evidence="3" type="primary">ddrOP3</name>
    <name evidence="6" type="ordered locus">Deide_3p02170</name>
</gene>
<name>DDROP_DEIDV</name>
<keyword id="KW-0238">DNA-binding</keyword>
<keyword id="KW-0614">Plasmid</keyword>
<keyword id="KW-1185">Reference proteome</keyword>
<keyword id="KW-0678">Repressor</keyword>
<keyword id="KW-0346">Stress response</keyword>
<keyword id="KW-0804">Transcription</keyword>
<keyword id="KW-0805">Transcription regulation</keyword>
<geneLocation type="plasmid">
    <name>pDeide3</name>
</geneLocation>
<comment type="function">
    <text evidence="1">Repressor specific for genes preceded by a radiation/desiccation response motif (RDRM) site, which is present upstream of several radiation-induced genes.</text>
</comment>
<comment type="PTM">
    <text evidence="5">Cleaved between Leu-106 and Arg-107 by the IrrE metalloprotease after exposure to radiation. Cleavage inactivates DdrOP3, leading to derepression of the target genes.</text>
</comment>
<sequence>MKLCERLRELRQERGLRLKDIAGAAQISVPYLSDLERGRTNPSLETLQSLASTYGITVHDLLEGVEFYGDQTAGALPQGLADLIADPALGAQLTPDWIRTLARIELRGKRPRDKQDWFEIYLHLKRILD</sequence>